<organism>
    <name type="scientific">Vibrio vulnificus (strain CMCP6)</name>
    <dbReference type="NCBI Taxonomy" id="216895"/>
    <lineage>
        <taxon>Bacteria</taxon>
        <taxon>Pseudomonadati</taxon>
        <taxon>Pseudomonadota</taxon>
        <taxon>Gammaproteobacteria</taxon>
        <taxon>Vibrionales</taxon>
        <taxon>Vibrionaceae</taxon>
        <taxon>Vibrio</taxon>
    </lineage>
</organism>
<protein>
    <recommendedName>
        <fullName evidence="1">Acetate kinase 2</fullName>
        <ecNumber evidence="1">2.7.2.1</ecNumber>
    </recommendedName>
    <alternativeName>
        <fullName evidence="1">Acetokinase 2</fullName>
    </alternativeName>
</protein>
<sequence>MSNSFVLVINSGSSSLKFAVINSVTGEAVLSGLGECFGLEDARMGWKYSGEKTEIAIEGEDNHHKIAIGKLVGLTEELGLTKDIVAVGHRIVHGGEKFTSTVRINEEVTAEIEKLADLAPLHNPAGAIGIRAAMEAFPALPQFAVFDTAFHQTMPKRAFTGAIANELYTDFGIRRYGFHGTSHYFVSREAAKMLNKPIEESSFISVHLGNGASVCAINNGESVDTSMGFTPLSGLMMGTRCGDLDPGIIEYLLKKGWSQEKVFNSLNKASGFLGVSGLTSDARGILEAMEQGHEGATLAFQVFTYRVAKYIASYLAALDSFDGIIFTGGIGENSLPIRREILKNLKLLGFVEDEKGNEDARFGNAGVIATSALLNAVAMVIPTNEEFVIAQQSVELL</sequence>
<gene>
    <name evidence="1" type="primary">ackA2</name>
    <name type="ordered locus">VV2_0148</name>
</gene>
<keyword id="KW-0067">ATP-binding</keyword>
<keyword id="KW-0963">Cytoplasm</keyword>
<keyword id="KW-0418">Kinase</keyword>
<keyword id="KW-0460">Magnesium</keyword>
<keyword id="KW-0479">Metal-binding</keyword>
<keyword id="KW-0547">Nucleotide-binding</keyword>
<keyword id="KW-0808">Transferase</keyword>
<feature type="chain" id="PRO_0000107642" description="Acetate kinase 2">
    <location>
        <begin position="1"/>
        <end position="397"/>
    </location>
</feature>
<feature type="active site" description="Proton donor/acceptor" evidence="1">
    <location>
        <position position="147"/>
    </location>
</feature>
<feature type="binding site" evidence="1">
    <location>
        <position position="10"/>
    </location>
    <ligand>
        <name>Mg(2+)</name>
        <dbReference type="ChEBI" id="CHEBI:18420"/>
    </ligand>
</feature>
<feature type="binding site" evidence="1">
    <location>
        <position position="17"/>
    </location>
    <ligand>
        <name>ATP</name>
        <dbReference type="ChEBI" id="CHEBI:30616"/>
    </ligand>
</feature>
<feature type="binding site" evidence="1">
    <location>
        <position position="90"/>
    </location>
    <ligand>
        <name>substrate</name>
    </ligand>
</feature>
<feature type="binding site" evidence="1">
    <location>
        <begin position="207"/>
        <end position="211"/>
    </location>
    <ligand>
        <name>ATP</name>
        <dbReference type="ChEBI" id="CHEBI:30616"/>
    </ligand>
</feature>
<feature type="binding site" evidence="1">
    <location>
        <begin position="281"/>
        <end position="283"/>
    </location>
    <ligand>
        <name>ATP</name>
        <dbReference type="ChEBI" id="CHEBI:30616"/>
    </ligand>
</feature>
<feature type="binding site" evidence="1">
    <location>
        <begin position="329"/>
        <end position="333"/>
    </location>
    <ligand>
        <name>ATP</name>
        <dbReference type="ChEBI" id="CHEBI:30616"/>
    </ligand>
</feature>
<feature type="binding site" evidence="1">
    <location>
        <position position="385"/>
    </location>
    <ligand>
        <name>Mg(2+)</name>
        <dbReference type="ChEBI" id="CHEBI:18420"/>
    </ligand>
</feature>
<feature type="site" description="Transition state stabilizer" evidence="1">
    <location>
        <position position="179"/>
    </location>
</feature>
<feature type="site" description="Transition state stabilizer" evidence="1">
    <location>
        <position position="240"/>
    </location>
</feature>
<proteinExistence type="inferred from homology"/>
<evidence type="ECO:0000255" key="1">
    <source>
        <dbReference type="HAMAP-Rule" id="MF_00020"/>
    </source>
</evidence>
<comment type="function">
    <text evidence="1">Catalyzes the formation of acetyl phosphate from acetate and ATP. Can also catalyze the reverse reaction.</text>
</comment>
<comment type="catalytic activity">
    <reaction evidence="1">
        <text>acetate + ATP = acetyl phosphate + ADP</text>
        <dbReference type="Rhea" id="RHEA:11352"/>
        <dbReference type="ChEBI" id="CHEBI:22191"/>
        <dbReference type="ChEBI" id="CHEBI:30089"/>
        <dbReference type="ChEBI" id="CHEBI:30616"/>
        <dbReference type="ChEBI" id="CHEBI:456216"/>
        <dbReference type="EC" id="2.7.2.1"/>
    </reaction>
</comment>
<comment type="cofactor">
    <cofactor evidence="1">
        <name>Mg(2+)</name>
        <dbReference type="ChEBI" id="CHEBI:18420"/>
    </cofactor>
    <cofactor evidence="1">
        <name>Mn(2+)</name>
        <dbReference type="ChEBI" id="CHEBI:29035"/>
    </cofactor>
    <text evidence="1">Mg(2+). Can also accept Mn(2+).</text>
</comment>
<comment type="pathway">
    <text evidence="1">Metabolic intermediate biosynthesis; acetyl-CoA biosynthesis; acetyl-CoA from acetate: step 1/2.</text>
</comment>
<comment type="subunit">
    <text evidence="1">Homodimer.</text>
</comment>
<comment type="subcellular location">
    <subcellularLocation>
        <location evidence="1">Cytoplasm</location>
    </subcellularLocation>
</comment>
<comment type="similarity">
    <text evidence="1">Belongs to the acetokinase family.</text>
</comment>
<accession>Q8D7K4</accession>
<dbReference type="EC" id="2.7.2.1" evidence="1"/>
<dbReference type="EMBL" id="AE016796">
    <property type="protein sequence ID" value="AAO07121.1"/>
    <property type="molecule type" value="Genomic_DNA"/>
</dbReference>
<dbReference type="RefSeq" id="WP_011081130.1">
    <property type="nucleotide sequence ID" value="NC_004460.2"/>
</dbReference>
<dbReference type="SMR" id="Q8D7K4"/>
<dbReference type="KEGG" id="vvu:VV2_0148"/>
<dbReference type="HOGENOM" id="CLU_020352_0_1_6"/>
<dbReference type="UniPathway" id="UPA00340">
    <property type="reaction ID" value="UER00458"/>
</dbReference>
<dbReference type="Proteomes" id="UP000002275">
    <property type="component" value="Chromosome 2"/>
</dbReference>
<dbReference type="GO" id="GO:0005829">
    <property type="term" value="C:cytosol"/>
    <property type="evidence" value="ECO:0007669"/>
    <property type="project" value="TreeGrafter"/>
</dbReference>
<dbReference type="GO" id="GO:0008776">
    <property type="term" value="F:acetate kinase activity"/>
    <property type="evidence" value="ECO:0007669"/>
    <property type="project" value="UniProtKB-UniRule"/>
</dbReference>
<dbReference type="GO" id="GO:0005524">
    <property type="term" value="F:ATP binding"/>
    <property type="evidence" value="ECO:0007669"/>
    <property type="project" value="UniProtKB-KW"/>
</dbReference>
<dbReference type="GO" id="GO:0000287">
    <property type="term" value="F:magnesium ion binding"/>
    <property type="evidence" value="ECO:0007669"/>
    <property type="project" value="UniProtKB-UniRule"/>
</dbReference>
<dbReference type="GO" id="GO:0006083">
    <property type="term" value="P:acetate metabolic process"/>
    <property type="evidence" value="ECO:0007669"/>
    <property type="project" value="TreeGrafter"/>
</dbReference>
<dbReference type="GO" id="GO:0006085">
    <property type="term" value="P:acetyl-CoA biosynthetic process"/>
    <property type="evidence" value="ECO:0007669"/>
    <property type="project" value="UniProtKB-UniRule"/>
</dbReference>
<dbReference type="CDD" id="cd24010">
    <property type="entry name" value="ASKHA_NBD_AcK_PK"/>
    <property type="match status" value="1"/>
</dbReference>
<dbReference type="Gene3D" id="3.30.420.40">
    <property type="match status" value="2"/>
</dbReference>
<dbReference type="HAMAP" id="MF_00020">
    <property type="entry name" value="Acetate_kinase"/>
    <property type="match status" value="1"/>
</dbReference>
<dbReference type="InterPro" id="IPR004372">
    <property type="entry name" value="Ac/propionate_kinase"/>
</dbReference>
<dbReference type="InterPro" id="IPR000890">
    <property type="entry name" value="Aliphatic_acid_kin_short-chain"/>
</dbReference>
<dbReference type="InterPro" id="IPR023865">
    <property type="entry name" value="Aliphatic_acid_kinase_CS"/>
</dbReference>
<dbReference type="InterPro" id="IPR043129">
    <property type="entry name" value="ATPase_NBD"/>
</dbReference>
<dbReference type="NCBIfam" id="TIGR00016">
    <property type="entry name" value="ackA"/>
    <property type="match status" value="1"/>
</dbReference>
<dbReference type="NCBIfam" id="NF009099">
    <property type="entry name" value="PRK12440.1"/>
    <property type="match status" value="1"/>
</dbReference>
<dbReference type="PANTHER" id="PTHR21060">
    <property type="entry name" value="ACETATE KINASE"/>
    <property type="match status" value="1"/>
</dbReference>
<dbReference type="PANTHER" id="PTHR21060:SF21">
    <property type="entry name" value="ACETATE KINASE"/>
    <property type="match status" value="1"/>
</dbReference>
<dbReference type="Pfam" id="PF00871">
    <property type="entry name" value="Acetate_kinase"/>
    <property type="match status" value="1"/>
</dbReference>
<dbReference type="PIRSF" id="PIRSF000722">
    <property type="entry name" value="Acetate_prop_kin"/>
    <property type="match status" value="1"/>
</dbReference>
<dbReference type="PRINTS" id="PR00471">
    <property type="entry name" value="ACETATEKNASE"/>
</dbReference>
<dbReference type="SUPFAM" id="SSF53067">
    <property type="entry name" value="Actin-like ATPase domain"/>
    <property type="match status" value="2"/>
</dbReference>
<dbReference type="PROSITE" id="PS01075">
    <property type="entry name" value="ACETATE_KINASE_1"/>
    <property type="match status" value="1"/>
</dbReference>
<dbReference type="PROSITE" id="PS01076">
    <property type="entry name" value="ACETATE_KINASE_2"/>
    <property type="match status" value="1"/>
</dbReference>
<reference key="1">
    <citation type="submission" date="2002-12" db="EMBL/GenBank/DDBJ databases">
        <title>Complete genome sequence of Vibrio vulnificus CMCP6.</title>
        <authorList>
            <person name="Rhee J.H."/>
            <person name="Kim S.Y."/>
            <person name="Chung S.S."/>
            <person name="Kim J.J."/>
            <person name="Moon Y.H."/>
            <person name="Jeong H."/>
            <person name="Choy H.E."/>
        </authorList>
    </citation>
    <scope>NUCLEOTIDE SEQUENCE [LARGE SCALE GENOMIC DNA]</scope>
    <source>
        <strain>CMCP6</strain>
    </source>
</reference>
<name>ACKA2_VIBVU</name>